<dbReference type="EMBL" id="CU694248">
    <property type="status" value="NOT_ANNOTATED_CDS"/>
    <property type="molecule type" value="Genomic_DNA"/>
</dbReference>
<dbReference type="SMR" id="E7F5F0"/>
<dbReference type="STRING" id="7955.ENSDARP00000111041"/>
<dbReference type="Ensembl" id="ENSDART00000122387">
    <property type="protein sequence ID" value="ENSDARP00000111041"/>
    <property type="gene ID" value="ENSDARG00000091073"/>
</dbReference>
<dbReference type="eggNOG" id="ENOG502S2JY">
    <property type="taxonomic scope" value="Eukaryota"/>
</dbReference>
<dbReference type="HOGENOM" id="CLU_120534_0_0_1"/>
<dbReference type="InParanoid" id="E7F5F0"/>
<dbReference type="OMA" id="DHCGESA"/>
<dbReference type="TreeFam" id="TF333390"/>
<dbReference type="Proteomes" id="UP000000437">
    <property type="component" value="Unplaced"/>
</dbReference>
<dbReference type="Bgee" id="ENSDARG00000091073">
    <property type="expression patterns" value="Expressed in tail and 12 other cell types or tissues"/>
</dbReference>
<dbReference type="ExpressionAtlas" id="E7F5F0">
    <property type="expression patterns" value="baseline"/>
</dbReference>
<dbReference type="GO" id="GO:0005615">
    <property type="term" value="C:extracellular space"/>
    <property type="evidence" value="ECO:0007669"/>
    <property type="project" value="UniProtKB-KW"/>
</dbReference>
<dbReference type="GO" id="GO:0005886">
    <property type="term" value="C:plasma membrane"/>
    <property type="evidence" value="ECO:0007669"/>
    <property type="project" value="UniProtKB-SubCell"/>
</dbReference>
<dbReference type="GO" id="GO:0005125">
    <property type="term" value="F:cytokine activity"/>
    <property type="evidence" value="ECO:0000314"/>
    <property type="project" value="UniProtKB"/>
</dbReference>
<dbReference type="GO" id="GO:0030298">
    <property type="term" value="F:receptor signaling protein tyrosine kinase activator activity"/>
    <property type="evidence" value="ECO:0000314"/>
    <property type="project" value="UniProtKB"/>
</dbReference>
<dbReference type="GO" id="GO:0030971">
    <property type="term" value="F:receptor tyrosine kinase binding"/>
    <property type="evidence" value="ECO:0007669"/>
    <property type="project" value="InterPro"/>
</dbReference>
<dbReference type="InterPro" id="IPR029364">
    <property type="entry name" value="ALKL1/2"/>
</dbReference>
<dbReference type="PANTHER" id="PTHR28676:SF2">
    <property type="entry name" value="ALK AND LTK LIGAND 2"/>
    <property type="match status" value="1"/>
</dbReference>
<dbReference type="PANTHER" id="PTHR28676">
    <property type="entry name" value="ALK AND LTK LIGAND 2-RELATED"/>
    <property type="match status" value="1"/>
</dbReference>
<dbReference type="Pfam" id="PF15129">
    <property type="entry name" value="ALKL1_2"/>
    <property type="match status" value="2"/>
</dbReference>
<evidence type="ECO:0000250" key="1">
    <source>
        <dbReference type="UniProtKB" id="Q6UX46"/>
    </source>
</evidence>
<evidence type="ECO:0000255" key="2"/>
<evidence type="ECO:0000256" key="3">
    <source>
        <dbReference type="SAM" id="MobiDB-lite"/>
    </source>
</evidence>
<evidence type="ECO:0000269" key="4">
    <source>
    </source>
</evidence>
<evidence type="ECO:0000269" key="5">
    <source>
    </source>
</evidence>
<evidence type="ECO:0000303" key="6">
    <source>
    </source>
</evidence>
<evidence type="ECO:0000303" key="7">
    <source>
    </source>
</evidence>
<evidence type="ECO:0000305" key="8"/>
<comment type="function">
    <text evidence="4 5">Cytokine that acts as a physiological ligand for receptor tyrosine kinases LTK and ALK (PubMed:29078341, PubMed:29317532). Required for neural crest cell differentiation and iridophore development during embryonic iridophore development and adult stripe development by acting as a receptor for LTK (PubMed:29078341, PubMed:29317532).</text>
</comment>
<comment type="subunit">
    <text evidence="1">Homodimer.</text>
</comment>
<comment type="subcellular location">
    <subcellularLocation>
        <location evidence="2">Secreted</location>
    </subcellularLocation>
    <subcellularLocation>
        <location evidence="1">Cell membrane</location>
    </subcellularLocation>
</comment>
<comment type="tissue specificity">
    <text evidence="5">Expressed at high level in the notochord and iridophore stripes of the trunk, as well as in the eye and swim bladder.</text>
</comment>
<comment type="disruption phenotype">
    <text evidence="4 5">Fishes show reduced dense iridophores in the light stripes of the trunk, particularly in the anterior region, resulting in irregular interruptions of melanophore stripes (PubMed:29078341, PubMed:29317532). Fishes lacking alkal1, alkal2a and alkal2b are embryonic lethal and display total loss of iridophores (PubMed:29317532).</text>
</comment>
<comment type="similarity">
    <text evidence="8">Belongs to the ALKAL family.</text>
</comment>
<proteinExistence type="evidence at transcript level"/>
<keyword id="KW-1003">Cell membrane</keyword>
<keyword id="KW-0202">Cytokine</keyword>
<keyword id="KW-1015">Disulfide bond</keyword>
<keyword id="KW-0472">Membrane</keyword>
<keyword id="KW-1185">Reference proteome</keyword>
<keyword id="KW-0964">Secreted</keyword>
<keyword id="KW-0732">Signal</keyword>
<accession>E7F5F0</accession>
<protein>
    <recommendedName>
        <fullName evidence="7">ALK and LTK ligand 2a</fullName>
    </recommendedName>
    <alternativeName>
        <fullName evidence="6">Augmentor alpha-1</fullName>
        <shortName evidence="6">AUG-alpha-1</shortName>
    </alternativeName>
</protein>
<sequence>MRALRAPVLVMGLVLLICTAAQSDASANKVEKTLRRIMEIMRQVENSADDESAQKTESAPEPKDTHHLKTASGETILEIFPRDLSRKEKFITILTGRRLSNPLRHQSCVFETSDLVVFHPSGPLYFGPKCKKDVYRLYHNTRDCTIPAHYKRCARLLTRLAGTRKCQEG</sequence>
<name>AKL2A_DANRE</name>
<organism>
    <name type="scientific">Danio rerio</name>
    <name type="common">Zebrafish</name>
    <name type="synonym">Brachydanio rerio</name>
    <dbReference type="NCBI Taxonomy" id="7955"/>
    <lineage>
        <taxon>Eukaryota</taxon>
        <taxon>Metazoa</taxon>
        <taxon>Chordata</taxon>
        <taxon>Craniata</taxon>
        <taxon>Vertebrata</taxon>
        <taxon>Euteleostomi</taxon>
        <taxon>Actinopterygii</taxon>
        <taxon>Neopterygii</taxon>
        <taxon>Teleostei</taxon>
        <taxon>Ostariophysi</taxon>
        <taxon>Cypriniformes</taxon>
        <taxon>Danionidae</taxon>
        <taxon>Danioninae</taxon>
        <taxon>Danio</taxon>
    </lineage>
</organism>
<reference key="1">
    <citation type="journal article" date="2013" name="Nature">
        <title>The zebrafish reference genome sequence and its relationship to the human genome.</title>
        <authorList>
            <person name="Howe K."/>
            <person name="Clark M.D."/>
            <person name="Torroja C.F."/>
            <person name="Torrance J."/>
            <person name="Berthelot C."/>
            <person name="Muffato M."/>
            <person name="Collins J.E."/>
            <person name="Humphray S."/>
            <person name="McLaren K."/>
            <person name="Matthews L."/>
            <person name="McLaren S."/>
            <person name="Sealy I."/>
            <person name="Caccamo M."/>
            <person name="Churcher C."/>
            <person name="Scott C."/>
            <person name="Barrett J.C."/>
            <person name="Koch R."/>
            <person name="Rauch G.J."/>
            <person name="White S."/>
            <person name="Chow W."/>
            <person name="Kilian B."/>
            <person name="Quintais L.T."/>
            <person name="Guerra-Assuncao J.A."/>
            <person name="Zhou Y."/>
            <person name="Gu Y."/>
            <person name="Yen J."/>
            <person name="Vogel J.H."/>
            <person name="Eyre T."/>
            <person name="Redmond S."/>
            <person name="Banerjee R."/>
            <person name="Chi J."/>
            <person name="Fu B."/>
            <person name="Langley E."/>
            <person name="Maguire S.F."/>
            <person name="Laird G.K."/>
            <person name="Lloyd D."/>
            <person name="Kenyon E."/>
            <person name="Donaldson S."/>
            <person name="Sehra H."/>
            <person name="Almeida-King J."/>
            <person name="Loveland J."/>
            <person name="Trevanion S."/>
            <person name="Jones M."/>
            <person name="Quail M."/>
            <person name="Willey D."/>
            <person name="Hunt A."/>
            <person name="Burton J."/>
            <person name="Sims S."/>
            <person name="McLay K."/>
            <person name="Plumb B."/>
            <person name="Davis J."/>
            <person name="Clee C."/>
            <person name="Oliver K."/>
            <person name="Clark R."/>
            <person name="Riddle C."/>
            <person name="Elliot D."/>
            <person name="Threadgold G."/>
            <person name="Harden G."/>
            <person name="Ware D."/>
            <person name="Begum S."/>
            <person name="Mortimore B."/>
            <person name="Kerry G."/>
            <person name="Heath P."/>
            <person name="Phillimore B."/>
            <person name="Tracey A."/>
            <person name="Corby N."/>
            <person name="Dunn M."/>
            <person name="Johnson C."/>
            <person name="Wood J."/>
            <person name="Clark S."/>
            <person name="Pelan S."/>
            <person name="Griffiths G."/>
            <person name="Smith M."/>
            <person name="Glithero R."/>
            <person name="Howden P."/>
            <person name="Barker N."/>
            <person name="Lloyd C."/>
            <person name="Stevens C."/>
            <person name="Harley J."/>
            <person name="Holt K."/>
            <person name="Panagiotidis G."/>
            <person name="Lovell J."/>
            <person name="Beasley H."/>
            <person name="Henderson C."/>
            <person name="Gordon D."/>
            <person name="Auger K."/>
            <person name="Wright D."/>
            <person name="Collins J."/>
            <person name="Raisen C."/>
            <person name="Dyer L."/>
            <person name="Leung K."/>
            <person name="Robertson L."/>
            <person name="Ambridge K."/>
            <person name="Leongamornlert D."/>
            <person name="McGuire S."/>
            <person name="Gilderthorp R."/>
            <person name="Griffiths C."/>
            <person name="Manthravadi D."/>
            <person name="Nichol S."/>
            <person name="Barker G."/>
            <person name="Whitehead S."/>
            <person name="Kay M."/>
            <person name="Brown J."/>
            <person name="Murnane C."/>
            <person name="Gray E."/>
            <person name="Humphries M."/>
            <person name="Sycamore N."/>
            <person name="Barker D."/>
            <person name="Saunders D."/>
            <person name="Wallis J."/>
            <person name="Babbage A."/>
            <person name="Hammond S."/>
            <person name="Mashreghi-Mohammadi M."/>
            <person name="Barr L."/>
            <person name="Martin S."/>
            <person name="Wray P."/>
            <person name="Ellington A."/>
            <person name="Matthews N."/>
            <person name="Ellwood M."/>
            <person name="Woodmansey R."/>
            <person name="Clark G."/>
            <person name="Cooper J."/>
            <person name="Tromans A."/>
            <person name="Grafham D."/>
            <person name="Skuce C."/>
            <person name="Pandian R."/>
            <person name="Andrews R."/>
            <person name="Harrison E."/>
            <person name="Kimberley A."/>
            <person name="Garnett J."/>
            <person name="Fosker N."/>
            <person name="Hall R."/>
            <person name="Garner P."/>
            <person name="Kelly D."/>
            <person name="Bird C."/>
            <person name="Palmer S."/>
            <person name="Gehring I."/>
            <person name="Berger A."/>
            <person name="Dooley C.M."/>
            <person name="Ersan-Urun Z."/>
            <person name="Eser C."/>
            <person name="Geiger H."/>
            <person name="Geisler M."/>
            <person name="Karotki L."/>
            <person name="Kirn A."/>
            <person name="Konantz J."/>
            <person name="Konantz M."/>
            <person name="Oberlander M."/>
            <person name="Rudolph-Geiger S."/>
            <person name="Teucke M."/>
            <person name="Lanz C."/>
            <person name="Raddatz G."/>
            <person name="Osoegawa K."/>
            <person name="Zhu B."/>
            <person name="Rapp A."/>
            <person name="Widaa S."/>
            <person name="Langford C."/>
            <person name="Yang F."/>
            <person name="Schuster S.C."/>
            <person name="Carter N.P."/>
            <person name="Harrow J."/>
            <person name="Ning Z."/>
            <person name="Herrero J."/>
            <person name="Searle S.M."/>
            <person name="Enright A."/>
            <person name="Geisler R."/>
            <person name="Plasterk R.H."/>
            <person name="Lee C."/>
            <person name="Westerfield M."/>
            <person name="de Jong P.J."/>
            <person name="Zon L.I."/>
            <person name="Postlethwait J.H."/>
            <person name="Nusslein-Volhard C."/>
            <person name="Hubbard T.J."/>
            <person name="Roest Crollius H."/>
            <person name="Rogers J."/>
            <person name="Stemple D.L."/>
        </authorList>
    </citation>
    <scope>NUCLEOTIDE SEQUENCE [LARGE SCALE GENOMIC DNA]</scope>
    <source>
        <strain>Tuebingen</strain>
    </source>
</reference>
<reference key="2">
    <citation type="journal article" date="2017" name="Proc. Natl. Acad. Sci. U.S.A.">
        <title>Alk and Ltk ligands are essential for iridophore development in zebrafish mediated by the receptor tyrosine kinase Ltk.</title>
        <authorList>
            <person name="Mo E.S."/>
            <person name="Cheng Q."/>
            <person name="Reshetnyak A.V."/>
            <person name="Schlessinger J."/>
            <person name="Nicoli S."/>
        </authorList>
    </citation>
    <scope>FUNCTION</scope>
    <scope>DISRUPTION PHENOTYPE</scope>
</reference>
<reference key="3">
    <citation type="journal article" date="2018" name="Proc. Natl. Acad. Sci. U.S.A.">
        <title>ALKALs are in vivo ligands for ALK family receptor tyrosine kinases in the neural crest and derived cells.</title>
        <authorList>
            <person name="Fadeev A."/>
            <person name="Mendoza-Garcia P."/>
            <person name="Irion U."/>
            <person name="Guan J."/>
            <person name="Pfeifer K."/>
            <person name="Wiessner S."/>
            <person name="Serluca F."/>
            <person name="Singh A.P."/>
            <person name="Nuesslein-Volhard C."/>
            <person name="Palmer R.H."/>
        </authorList>
    </citation>
    <scope>FUNCTION</scope>
    <scope>TISSUE SPECIFICITY</scope>
    <scope>DISRUPTION PHENOTYPE</scope>
</reference>
<feature type="signal peptide" evidence="2">
    <location>
        <begin position="1"/>
        <end position="25"/>
    </location>
</feature>
<feature type="chain" id="PRO_5015335589" description="ALK and LTK ligand 2a" evidence="2">
    <location>
        <begin position="26"/>
        <end position="169"/>
    </location>
</feature>
<feature type="region of interest" description="Disordered" evidence="3">
    <location>
        <begin position="45"/>
        <end position="68"/>
    </location>
</feature>
<feature type="compositionally biased region" description="Basic and acidic residues" evidence="3">
    <location>
        <begin position="52"/>
        <end position="67"/>
    </location>
</feature>
<feature type="disulfide bond" evidence="1">
    <location>
        <begin position="130"/>
        <end position="166"/>
    </location>
</feature>
<feature type="disulfide bond" evidence="1">
    <location>
        <begin position="144"/>
        <end position="153"/>
    </location>
</feature>
<gene>
    <name evidence="7" type="primary">alkal2a</name>
</gene>